<sequence>KKSDYIKLYVRRVFITDDFHDMMPKYLNFVKGVVDSDDLPLNVSRETLQQHKLLKVIRKKLVRKTLDMIKKIADEKYNDTFWKEFGTNIKLGVIEDHSNRTRLAKLLRFQSSHHSTDITSLDQYVERMKEKQDKIYFMAGSSRKEAESSPFVERLLKKGYEVIYLTEPVDEYCIQALPEFDGKRFQNVAKEGVKFDESEKTKENREATEKEFEPLLNWMKDKALKDKIEKAVVSQRLTESPCALVASQYGWSGNMERIMKAQAYQTGKDISTNYYASQKKTFEINPRHPLIRDMLRRVKEDEDDKTVLDLAVVLFETATLRSGYLLPDTKAYADRIERMLRLSLNIDPEAQVEEEPEEEPEDTTEDTEQDEEEEVDAGTEEEEEEEQETAKESTAEKDEL</sequence>
<organism>
    <name type="scientific">Mesocricetus auratus</name>
    <name type="common">Golden hamster</name>
    <dbReference type="NCBI Taxonomy" id="10036"/>
    <lineage>
        <taxon>Eukaryota</taxon>
        <taxon>Metazoa</taxon>
        <taxon>Chordata</taxon>
        <taxon>Craniata</taxon>
        <taxon>Vertebrata</taxon>
        <taxon>Euteleostomi</taxon>
        <taxon>Mammalia</taxon>
        <taxon>Eutheria</taxon>
        <taxon>Euarchontoglires</taxon>
        <taxon>Glires</taxon>
        <taxon>Rodentia</taxon>
        <taxon>Myomorpha</taxon>
        <taxon>Muroidea</taxon>
        <taxon>Cricetidae</taxon>
        <taxon>Cricetinae</taxon>
        <taxon>Mesocricetus</taxon>
    </lineage>
</organism>
<keyword id="KW-0007">Acetylation</keyword>
<keyword id="KW-0067">ATP-binding</keyword>
<keyword id="KW-0106">Calcium</keyword>
<keyword id="KW-0143">Chaperone</keyword>
<keyword id="KW-1015">Disulfide bond</keyword>
<keyword id="KW-0256">Endoplasmic reticulum</keyword>
<keyword id="KW-0325">Glycoprotein</keyword>
<keyword id="KW-0378">Hydrolase</keyword>
<keyword id="KW-0547">Nucleotide-binding</keyword>
<keyword id="KW-0597">Phosphoprotein</keyword>
<keyword id="KW-1185">Reference proteome</keyword>
<keyword id="KW-0703">Sarcoplasmic reticulum</keyword>
<evidence type="ECO:0000250" key="1">
    <source>
        <dbReference type="UniProtKB" id="P08113"/>
    </source>
</evidence>
<evidence type="ECO:0000250" key="2">
    <source>
        <dbReference type="UniProtKB" id="P14625"/>
    </source>
</evidence>
<evidence type="ECO:0000250" key="3">
    <source>
        <dbReference type="UniProtKB" id="P41148"/>
    </source>
</evidence>
<evidence type="ECO:0000255" key="4"/>
<evidence type="ECO:0000256" key="5">
    <source>
        <dbReference type="SAM" id="MobiDB-lite"/>
    </source>
</evidence>
<evidence type="ECO:0000269" key="6">
    <source>
    </source>
</evidence>
<evidence type="ECO:0000303" key="7">
    <source>
    </source>
</evidence>
<evidence type="ECO:0000305" key="8"/>
<protein>
    <recommendedName>
        <fullName>Endoplasmin</fullName>
    </recommendedName>
    <alternativeName>
        <fullName evidence="7">94 kDa glucose-regulated protein</fullName>
        <shortName evidence="7">GRP-94</shortName>
        <ecNumber evidence="3">3.6.4.-</ecNumber>
    </alternativeName>
    <alternativeName>
        <fullName>Heat shock protein 90 kDa beta member 1</fullName>
    </alternativeName>
</protein>
<dbReference type="EC" id="3.6.4.-" evidence="3"/>
<dbReference type="EMBL" id="X04850">
    <property type="protein sequence ID" value="CAA28541.1"/>
    <property type="molecule type" value="mRNA"/>
</dbReference>
<dbReference type="PIR" id="A26258">
    <property type="entry name" value="A26258"/>
</dbReference>
<dbReference type="SMR" id="P08712"/>
<dbReference type="STRING" id="10036.ENSMAUP00000021968"/>
<dbReference type="GlyCosmos" id="P08712">
    <property type="glycosylation" value="3 sites, No reported glycans"/>
</dbReference>
<dbReference type="eggNOG" id="KOG0020">
    <property type="taxonomic scope" value="Eukaryota"/>
</dbReference>
<dbReference type="Proteomes" id="UP000189706">
    <property type="component" value="Unplaced"/>
</dbReference>
<dbReference type="GO" id="GO:0042470">
    <property type="term" value="C:melanosome"/>
    <property type="evidence" value="ECO:0007669"/>
    <property type="project" value="UniProtKB-SubCell"/>
</dbReference>
<dbReference type="GO" id="GO:0033018">
    <property type="term" value="C:sarcoplasmic reticulum lumen"/>
    <property type="evidence" value="ECO:0007669"/>
    <property type="project" value="UniProtKB-SubCell"/>
</dbReference>
<dbReference type="GO" id="GO:0005524">
    <property type="term" value="F:ATP binding"/>
    <property type="evidence" value="ECO:0007669"/>
    <property type="project" value="UniProtKB-KW"/>
</dbReference>
<dbReference type="GO" id="GO:0016887">
    <property type="term" value="F:ATP hydrolysis activity"/>
    <property type="evidence" value="ECO:0007669"/>
    <property type="project" value="InterPro"/>
</dbReference>
<dbReference type="GO" id="GO:0140662">
    <property type="term" value="F:ATP-dependent protein folding chaperone"/>
    <property type="evidence" value="ECO:0007669"/>
    <property type="project" value="InterPro"/>
</dbReference>
<dbReference type="GO" id="GO:0051082">
    <property type="term" value="F:unfolded protein binding"/>
    <property type="evidence" value="ECO:0007669"/>
    <property type="project" value="InterPro"/>
</dbReference>
<dbReference type="GO" id="GO:0036503">
    <property type="term" value="P:ERAD pathway"/>
    <property type="evidence" value="ECO:0000250"/>
    <property type="project" value="UniProtKB"/>
</dbReference>
<dbReference type="FunFam" id="1.20.120.790:FF:000003">
    <property type="entry name" value="Heat shock protein 90"/>
    <property type="match status" value="1"/>
</dbReference>
<dbReference type="FunFam" id="3.40.50.11260:FF:000003">
    <property type="entry name" value="Heat shock protein 90"/>
    <property type="match status" value="1"/>
</dbReference>
<dbReference type="Gene3D" id="3.30.230.80">
    <property type="match status" value="1"/>
</dbReference>
<dbReference type="Gene3D" id="3.40.50.11260">
    <property type="match status" value="1"/>
</dbReference>
<dbReference type="Gene3D" id="1.20.120.790">
    <property type="entry name" value="Heat shock protein 90, C-terminal domain"/>
    <property type="match status" value="1"/>
</dbReference>
<dbReference type="InterPro" id="IPR037196">
    <property type="entry name" value="HSP90_C"/>
</dbReference>
<dbReference type="InterPro" id="IPR001404">
    <property type="entry name" value="Hsp90_fam"/>
</dbReference>
<dbReference type="InterPro" id="IPR020568">
    <property type="entry name" value="Ribosomal_Su5_D2-typ_SF"/>
</dbReference>
<dbReference type="PANTHER" id="PTHR11528">
    <property type="entry name" value="HEAT SHOCK PROTEIN 90 FAMILY MEMBER"/>
    <property type="match status" value="1"/>
</dbReference>
<dbReference type="Pfam" id="PF00183">
    <property type="entry name" value="HSP90"/>
    <property type="match status" value="1"/>
</dbReference>
<dbReference type="SUPFAM" id="SSF110942">
    <property type="entry name" value="HSP90 C-terminal domain"/>
    <property type="match status" value="1"/>
</dbReference>
<dbReference type="SUPFAM" id="SSF54211">
    <property type="entry name" value="Ribosomal protein S5 domain 2-like"/>
    <property type="match status" value="1"/>
</dbReference>
<dbReference type="PROSITE" id="PS00014">
    <property type="entry name" value="ER_TARGET"/>
    <property type="match status" value="1"/>
</dbReference>
<reference key="1">
    <citation type="journal article" date="1987" name="J. Mol. Biol.">
        <title>The glucose-regulated protein grp94 is related to heat shock protein hsp90.</title>
        <authorList>
            <person name="Sorger P.K."/>
            <person name="Pelham H.R.B."/>
        </authorList>
    </citation>
    <scope>NUCLEOTIDE SEQUENCE [MRNA]</scope>
    <scope>INDUCTION</scope>
</reference>
<reference key="2">
    <citation type="journal article" date="2010" name="Asian J. Androl.">
        <title>Glucose-regulated protein precursor (GRP78) and tumor rejection antigen (GP96) are unique to hamster caput epididymal spermatozoa.</title>
        <authorList>
            <person name="Kameshwari D.B."/>
            <person name="Bhande S."/>
            <person name="Sundaram C.S."/>
            <person name="Kota V."/>
            <person name="Siva A.B."/>
            <person name="Shivaji S."/>
        </authorList>
    </citation>
    <scope>IDENTIFICATION BY MASS SPECTROMETRY</scope>
    <scope>TISSUE SPECIFICITY</scope>
</reference>
<proteinExistence type="evidence at protein level"/>
<feature type="chain" id="PRO_0000062926" description="Endoplasmin">
    <location>
        <begin position="1" status="less than"/>
        <end position="400"/>
    </location>
</feature>
<feature type="region of interest" description="Disordered" evidence="5">
    <location>
        <begin position="346"/>
        <end position="400"/>
    </location>
</feature>
<feature type="short sequence motif" description="Prevents secretion from ER">
    <location>
        <begin position="397"/>
        <end position="400"/>
    </location>
</feature>
<feature type="compositionally biased region" description="Acidic residues" evidence="5">
    <location>
        <begin position="350"/>
        <end position="387"/>
    </location>
</feature>
<feature type="compositionally biased region" description="Basic and acidic residues" evidence="5">
    <location>
        <begin position="388"/>
        <end position="400"/>
    </location>
</feature>
<feature type="site" description="Important for ATP hydrolysis" evidence="3">
    <location>
        <position position="45"/>
    </location>
</feature>
<feature type="modified residue" description="N6-succinyllysine" evidence="1">
    <location>
        <position position="1"/>
    </location>
</feature>
<feature type="modified residue" description="Phosphoserine" evidence="2">
    <location>
        <position position="44"/>
    </location>
</feature>
<feature type="modified residue" description="N6-acetyllysine" evidence="1">
    <location>
        <position position="76"/>
    </location>
</feature>
<feature type="modified residue" description="N6-succinyllysine" evidence="1">
    <location>
        <position position="230"/>
    </location>
</feature>
<feature type="modified residue" description="Phosphothreonine" evidence="2">
    <location>
        <position position="379"/>
    </location>
</feature>
<feature type="glycosylation site" description="N-linked (GlcNAc...) asparagine" evidence="4">
    <location>
        <position position="42"/>
    </location>
</feature>
<feature type="glycosylation site" description="N-linked (GlcNAc...) asparagine" evidence="4">
    <location>
        <position position="78"/>
    </location>
</feature>
<feature type="glycosylation site" description="N-linked (GlcNAc...) asparagine" evidence="4">
    <location>
        <position position="99"/>
    </location>
</feature>
<feature type="non-terminal residue">
    <location>
        <position position="1"/>
    </location>
</feature>
<name>ENPL_MESAU</name>
<gene>
    <name type="primary">HSP90B1</name>
    <name evidence="7" type="synonym">GRP94</name>
    <name evidence="2" type="synonym">HSPC4</name>
</gene>
<accession>P08712</accession>
<comment type="function">
    <text evidence="1 2">ATP-dependent chaperone involved in the processing of proteins in the endoplasmic reticulum, regulating their transport. Together with MESD, acts as a modulator of the Wnt pathway by promoting the folding of LRP6, a coreceptor of the canonical Wnt pathway (By similarity). When associated with CNPY3, required for proper folding of Toll-like receptors (By similarity). Promotes folding and trafficking of TLR4 to the cell surface. May participate in the unfolding of cytosolic leaderless cargos (lacking the secretion signal sequence) such as the interleukin 1/IL-1 to facilitate their translocation into the ERGIC (endoplasmic reticulum-Golgi intermediate compartment) and secretion; the translocation process is mediated by the cargo receptor TMED10 (By similarity).</text>
</comment>
<comment type="catalytic activity">
    <reaction evidence="3">
        <text>ATP + H2O = ADP + phosphate + H(+)</text>
        <dbReference type="Rhea" id="RHEA:13065"/>
        <dbReference type="ChEBI" id="CHEBI:15377"/>
        <dbReference type="ChEBI" id="CHEBI:15378"/>
        <dbReference type="ChEBI" id="CHEBI:30616"/>
        <dbReference type="ChEBI" id="CHEBI:43474"/>
        <dbReference type="ChEBI" id="CHEBI:456216"/>
    </reaction>
    <physiologicalReaction direction="left-to-right" evidence="3">
        <dbReference type="Rhea" id="RHEA:13066"/>
    </physiologicalReaction>
</comment>
<comment type="subunit">
    <text evidence="1 2">Homodimer; disulfide-linked. Component of an EIF2 complex at least composed of CELF1/CUGBP1, CALR, CALR3, EIF2S1, EIF2S2, HSP90B1 and HSPA5 (By similarity). Part of a large chaperone multiprotein complex comprising DNAJB11, HSP90B1, HSPA5, HYOU, PDIA2, PDIA4, PDIA6, PPIB, SDF2L1, UGGT1 and very small amounts of ERP29, but not, or at very low levels, CALR nor CANX. Interacts with AIMP1; regulates its retention in the endoplasmic reticulum. Hyperglycosylated form interacts with OS9; promoting its degradation by the endoplasmic reticulum associated degradation (ERAD) (By similarity). Interacts with CNPY3. This interaction is disrupted in the presence of ATP (By similarity). Interacts with TLR4 and TLR9, but not with TLR3 (By similarity). Interacts with MZB1 in a calcium-dependent manner (By similarity). Interacts with METTL23. Interacts with IL1B; the interaction facilitates cargo translocation into the ERGIC. Interacts with EIF2AK3 (By similarity).</text>
</comment>
<comment type="subcellular location">
    <subcellularLocation>
        <location evidence="2">Endoplasmic reticulum lumen</location>
    </subcellularLocation>
    <subcellularLocation>
        <location evidence="3">Sarcoplasmic reticulum lumen</location>
    </subcellularLocation>
    <subcellularLocation>
        <location evidence="2">Melanosome</location>
    </subcellularLocation>
</comment>
<comment type="induction">
    <text evidence="6">The synthesis of this protein is stimulated when fibroblasts are deprived of glucose.</text>
</comment>
<comment type="domain">
    <text evidence="2">The SRT pseudosubstrate motif associates with STT3A during translation in normal conditions, preventing glycosylation of facultative sites until HSP90B1 folding is completed.</text>
</comment>
<comment type="PTM">
    <text evidence="3">Phosphorylated by CK2.</text>
</comment>
<comment type="PTM">
    <text evidence="2">N-glycosylated cotranslationally at Asn-217 by STT3A-containing OST-A complex: this glycosylation is constitutive. In response to various stress, 5 additional facultative sites (Asn-62, Asn-107, Asn-445, Asn-481 and Asn-502) can be glycosylated post-translationally by STT3B-containing OST-B complex, leading to a hyperglycosylated form that is degraded by the ER-associated degradation (ERAD) pathway. In normal conditions, the OST-A complex together with CCDC134 prevent glycosylation at facultative sites during protein folding, thereby preventing hyperglycosylation. Mechanistically, nascent HSP90B1 is tethered during translation to a specialized CCDC134-containing translocon that forms a microenvironment for its folding, in which STT3A associates with the SRT pseudosubstrate motif, and prevents access to facultative glycosylation sites until folding is completed, rendering its facultative sites inaccessible to the OST-B complex.</text>
</comment>
<comment type="similarity">
    <text evidence="8">Belongs to the heat shock protein 90 family.</text>
</comment>